<sequence>MNEQHAQSDRPPTVRPMDFLLVTGLSGAGLQTAAKVLEDLGWYVADNLPPELISRMVDLSLESDSRLERLAVVIDVRSRLFTGDLGWVLTELESKPVHTRVLYLDASDEVLVRRFEQVRRSHPLSGGGAEGTLSEGIAAERDQLAKVKAAADLVIDTSSLAAHQLRQKIEDAFGDAENRTMQVTVQSFGFKYGLPMDADLVCDVRFLPNPHWIPELRPHTGQSEDVRDYVLSQDGAEDYLATYHHLLDLTIAGYRREGKRYMTIAVGCTGGKHRSVAMSEALASRLGKDSGLNVRVVHRDLGRE</sequence>
<accession>Q0S0J8</accession>
<name>Y7174_RHOJR</name>
<gene>
    <name type="ordered locus">RHA1_ro07174</name>
</gene>
<evidence type="ECO:0000255" key="1">
    <source>
        <dbReference type="HAMAP-Rule" id="MF_00636"/>
    </source>
</evidence>
<dbReference type="EMBL" id="CP000431">
    <property type="protein sequence ID" value="ABG98938.1"/>
    <property type="molecule type" value="Genomic_DNA"/>
</dbReference>
<dbReference type="SMR" id="Q0S0J8"/>
<dbReference type="KEGG" id="rha:RHA1_ro07174"/>
<dbReference type="eggNOG" id="COG1660">
    <property type="taxonomic scope" value="Bacteria"/>
</dbReference>
<dbReference type="HOGENOM" id="CLU_059558_0_0_11"/>
<dbReference type="OrthoDB" id="9784461at2"/>
<dbReference type="Proteomes" id="UP000008710">
    <property type="component" value="Chromosome"/>
</dbReference>
<dbReference type="GO" id="GO:0005524">
    <property type="term" value="F:ATP binding"/>
    <property type="evidence" value="ECO:0007669"/>
    <property type="project" value="UniProtKB-UniRule"/>
</dbReference>
<dbReference type="GO" id="GO:0005525">
    <property type="term" value="F:GTP binding"/>
    <property type="evidence" value="ECO:0007669"/>
    <property type="project" value="UniProtKB-UniRule"/>
</dbReference>
<dbReference type="Gene3D" id="3.40.50.300">
    <property type="entry name" value="P-loop containing nucleotide triphosphate hydrolases"/>
    <property type="match status" value="1"/>
</dbReference>
<dbReference type="HAMAP" id="MF_00636">
    <property type="entry name" value="RapZ_like"/>
    <property type="match status" value="1"/>
</dbReference>
<dbReference type="InterPro" id="IPR027417">
    <property type="entry name" value="P-loop_NTPase"/>
</dbReference>
<dbReference type="InterPro" id="IPR005337">
    <property type="entry name" value="RapZ-like"/>
</dbReference>
<dbReference type="InterPro" id="IPR053930">
    <property type="entry name" value="RapZ-like_N"/>
</dbReference>
<dbReference type="InterPro" id="IPR053931">
    <property type="entry name" value="RapZ_C"/>
</dbReference>
<dbReference type="NCBIfam" id="NF003828">
    <property type="entry name" value="PRK05416.1"/>
    <property type="match status" value="1"/>
</dbReference>
<dbReference type="PANTHER" id="PTHR30448">
    <property type="entry name" value="RNASE ADAPTER PROTEIN RAPZ"/>
    <property type="match status" value="1"/>
</dbReference>
<dbReference type="PANTHER" id="PTHR30448:SF0">
    <property type="entry name" value="RNASE ADAPTER PROTEIN RAPZ"/>
    <property type="match status" value="1"/>
</dbReference>
<dbReference type="Pfam" id="PF22740">
    <property type="entry name" value="PapZ_C"/>
    <property type="match status" value="1"/>
</dbReference>
<dbReference type="Pfam" id="PF03668">
    <property type="entry name" value="RapZ-like_N"/>
    <property type="match status" value="1"/>
</dbReference>
<dbReference type="PIRSF" id="PIRSF005052">
    <property type="entry name" value="P-loopkin"/>
    <property type="match status" value="1"/>
</dbReference>
<dbReference type="SUPFAM" id="SSF52540">
    <property type="entry name" value="P-loop containing nucleoside triphosphate hydrolases"/>
    <property type="match status" value="1"/>
</dbReference>
<feature type="chain" id="PRO_0000258990" description="Nucleotide-binding protein RHA1_ro07174">
    <location>
        <begin position="1"/>
        <end position="304"/>
    </location>
</feature>
<feature type="binding site" evidence="1">
    <location>
        <begin position="24"/>
        <end position="31"/>
    </location>
    <ligand>
        <name>ATP</name>
        <dbReference type="ChEBI" id="CHEBI:30616"/>
    </ligand>
</feature>
<feature type="binding site" evidence="1">
    <location>
        <begin position="75"/>
        <end position="78"/>
    </location>
    <ligand>
        <name>GTP</name>
        <dbReference type="ChEBI" id="CHEBI:37565"/>
    </ligand>
</feature>
<proteinExistence type="inferred from homology"/>
<protein>
    <recommendedName>
        <fullName evidence="1">Nucleotide-binding protein RHA1_ro07174</fullName>
    </recommendedName>
</protein>
<comment type="function">
    <text evidence="1">Displays ATPase and GTPase activities.</text>
</comment>
<comment type="similarity">
    <text evidence="1">Belongs to the RapZ-like family.</text>
</comment>
<organism>
    <name type="scientific">Rhodococcus jostii (strain RHA1)</name>
    <dbReference type="NCBI Taxonomy" id="101510"/>
    <lineage>
        <taxon>Bacteria</taxon>
        <taxon>Bacillati</taxon>
        <taxon>Actinomycetota</taxon>
        <taxon>Actinomycetes</taxon>
        <taxon>Mycobacteriales</taxon>
        <taxon>Nocardiaceae</taxon>
        <taxon>Rhodococcus</taxon>
    </lineage>
</organism>
<reference key="1">
    <citation type="journal article" date="2006" name="Proc. Natl. Acad. Sci. U.S.A.">
        <title>The complete genome of Rhodococcus sp. RHA1 provides insights into a catabolic powerhouse.</title>
        <authorList>
            <person name="McLeod M.P."/>
            <person name="Warren R.L."/>
            <person name="Hsiao W.W.L."/>
            <person name="Araki N."/>
            <person name="Myhre M."/>
            <person name="Fernandes C."/>
            <person name="Miyazawa D."/>
            <person name="Wong W."/>
            <person name="Lillquist A.L."/>
            <person name="Wang D."/>
            <person name="Dosanjh M."/>
            <person name="Hara H."/>
            <person name="Petrescu A."/>
            <person name="Morin R.D."/>
            <person name="Yang G."/>
            <person name="Stott J.M."/>
            <person name="Schein J.E."/>
            <person name="Shin H."/>
            <person name="Smailus D."/>
            <person name="Siddiqui A.S."/>
            <person name="Marra M.A."/>
            <person name="Jones S.J.M."/>
            <person name="Holt R."/>
            <person name="Brinkman F.S.L."/>
            <person name="Miyauchi K."/>
            <person name="Fukuda M."/>
            <person name="Davies J.E."/>
            <person name="Mohn W.W."/>
            <person name="Eltis L.D."/>
        </authorList>
    </citation>
    <scope>NUCLEOTIDE SEQUENCE [LARGE SCALE GENOMIC DNA]</scope>
    <source>
        <strain>RHA1</strain>
    </source>
</reference>
<keyword id="KW-0067">ATP-binding</keyword>
<keyword id="KW-0342">GTP-binding</keyword>
<keyword id="KW-0547">Nucleotide-binding</keyword>